<name>RIMK_SALPA</name>
<comment type="function">
    <text evidence="1">An L-glutamate ligase that catalyzes the ATP-dependent post-translational addition of glutamate residues to the C-terminus of ribosomal protein bS6 (RpsF). Is also able to catalyze the synthesis of poly-alpha-glutamate in vitro, via ATP hydrolysis from unprotected glutamate as substrate. The number of glutamate residues added to either RpsF or to poly-alpha-glutamate changes with pH.</text>
</comment>
<comment type="cofactor">
    <cofactor evidence="1">
        <name>Mg(2+)</name>
        <dbReference type="ChEBI" id="CHEBI:18420"/>
    </cofactor>
    <cofactor evidence="1">
        <name>Mn(2+)</name>
        <dbReference type="ChEBI" id="CHEBI:29035"/>
    </cofactor>
    <text evidence="1">Binds 2 magnesium or manganese ions per subunit.</text>
</comment>
<comment type="similarity">
    <text evidence="1">Belongs to the RimK family.</text>
</comment>
<dbReference type="EC" id="6.3.2.-" evidence="1"/>
<dbReference type="EMBL" id="CP000026">
    <property type="protein sequence ID" value="AAV77798.1"/>
    <property type="molecule type" value="Genomic_DNA"/>
</dbReference>
<dbReference type="RefSeq" id="WP_000684361.1">
    <property type="nucleotide sequence ID" value="NC_006511.1"/>
</dbReference>
<dbReference type="SMR" id="Q5PGM5"/>
<dbReference type="KEGG" id="spt:SPA1887"/>
<dbReference type="HOGENOM" id="CLU_054353_0_1_6"/>
<dbReference type="Proteomes" id="UP000008185">
    <property type="component" value="Chromosome"/>
</dbReference>
<dbReference type="GO" id="GO:0005737">
    <property type="term" value="C:cytoplasm"/>
    <property type="evidence" value="ECO:0007669"/>
    <property type="project" value="TreeGrafter"/>
</dbReference>
<dbReference type="GO" id="GO:0005524">
    <property type="term" value="F:ATP binding"/>
    <property type="evidence" value="ECO:0007669"/>
    <property type="project" value="UniProtKB-UniRule"/>
</dbReference>
<dbReference type="GO" id="GO:0046872">
    <property type="term" value="F:metal ion binding"/>
    <property type="evidence" value="ECO:0007669"/>
    <property type="project" value="UniProtKB-KW"/>
</dbReference>
<dbReference type="GO" id="GO:0018169">
    <property type="term" value="F:ribosomal S6-glutamic acid ligase activity"/>
    <property type="evidence" value="ECO:0007669"/>
    <property type="project" value="UniProtKB-UniRule"/>
</dbReference>
<dbReference type="GO" id="GO:0036211">
    <property type="term" value="P:protein modification process"/>
    <property type="evidence" value="ECO:0007669"/>
    <property type="project" value="InterPro"/>
</dbReference>
<dbReference type="GO" id="GO:0009432">
    <property type="term" value="P:SOS response"/>
    <property type="evidence" value="ECO:0007669"/>
    <property type="project" value="TreeGrafter"/>
</dbReference>
<dbReference type="GO" id="GO:0006412">
    <property type="term" value="P:translation"/>
    <property type="evidence" value="ECO:0007669"/>
    <property type="project" value="UniProtKB-KW"/>
</dbReference>
<dbReference type="FunFam" id="3.40.50.20:FF:000004">
    <property type="entry name" value="Probable alpha-L-glutamate ligase"/>
    <property type="match status" value="1"/>
</dbReference>
<dbReference type="FunFam" id="3.30.1490.20:FF:000005">
    <property type="entry name" value="Probable alpha-L-glutamate ligase 1"/>
    <property type="match status" value="1"/>
</dbReference>
<dbReference type="FunFam" id="3.30.470.20:FF:000016">
    <property type="entry name" value="Ribosomal protein S6--L-glutamate ligase"/>
    <property type="match status" value="1"/>
</dbReference>
<dbReference type="Gene3D" id="3.40.50.20">
    <property type="match status" value="1"/>
</dbReference>
<dbReference type="Gene3D" id="3.30.1490.20">
    <property type="entry name" value="ATP-grasp fold, A domain"/>
    <property type="match status" value="1"/>
</dbReference>
<dbReference type="Gene3D" id="3.30.470.20">
    <property type="entry name" value="ATP-grasp fold, B domain"/>
    <property type="match status" value="1"/>
</dbReference>
<dbReference type="HAMAP" id="MF_01552">
    <property type="entry name" value="RimK"/>
    <property type="match status" value="1"/>
</dbReference>
<dbReference type="InterPro" id="IPR011761">
    <property type="entry name" value="ATP-grasp"/>
</dbReference>
<dbReference type="InterPro" id="IPR013651">
    <property type="entry name" value="ATP-grasp_RimK-type"/>
</dbReference>
<dbReference type="InterPro" id="IPR013815">
    <property type="entry name" value="ATP_grasp_subdomain_1"/>
</dbReference>
<dbReference type="InterPro" id="IPR023533">
    <property type="entry name" value="RimK"/>
</dbReference>
<dbReference type="InterPro" id="IPR041107">
    <property type="entry name" value="Rimk_N"/>
</dbReference>
<dbReference type="InterPro" id="IPR004666">
    <property type="entry name" value="Rp_bS6_RimK/Lys_biosynth_LsyX"/>
</dbReference>
<dbReference type="NCBIfam" id="NF007764">
    <property type="entry name" value="PRK10446.1"/>
    <property type="match status" value="1"/>
</dbReference>
<dbReference type="NCBIfam" id="TIGR00768">
    <property type="entry name" value="rimK_fam"/>
    <property type="match status" value="1"/>
</dbReference>
<dbReference type="PANTHER" id="PTHR21621:SF7">
    <property type="entry name" value="RIBOSOMAL PROTEIN BS6--L-GLUTAMATE LIGASE"/>
    <property type="match status" value="1"/>
</dbReference>
<dbReference type="PANTHER" id="PTHR21621">
    <property type="entry name" value="RIBOSOMAL PROTEIN S6 MODIFICATION PROTEIN"/>
    <property type="match status" value="1"/>
</dbReference>
<dbReference type="Pfam" id="PF08443">
    <property type="entry name" value="RimK"/>
    <property type="match status" value="1"/>
</dbReference>
<dbReference type="Pfam" id="PF18030">
    <property type="entry name" value="Rimk_N"/>
    <property type="match status" value="1"/>
</dbReference>
<dbReference type="SUPFAM" id="SSF56059">
    <property type="entry name" value="Glutathione synthetase ATP-binding domain-like"/>
    <property type="match status" value="1"/>
</dbReference>
<dbReference type="PROSITE" id="PS50975">
    <property type="entry name" value="ATP_GRASP"/>
    <property type="match status" value="1"/>
</dbReference>
<keyword id="KW-0067">ATP-binding</keyword>
<keyword id="KW-0436">Ligase</keyword>
<keyword id="KW-0460">Magnesium</keyword>
<keyword id="KW-0464">Manganese</keyword>
<keyword id="KW-0479">Metal-binding</keyword>
<keyword id="KW-0547">Nucleotide-binding</keyword>
<keyword id="KW-0648">Protein biosynthesis</keyword>
<feature type="chain" id="PRO_0000205479" description="Ribosomal protein bS6--L-glutamate ligase">
    <location>
        <begin position="1"/>
        <end position="300"/>
    </location>
</feature>
<feature type="domain" description="ATP-grasp" evidence="1">
    <location>
        <begin position="104"/>
        <end position="287"/>
    </location>
</feature>
<feature type="binding site" evidence="1">
    <location>
        <position position="141"/>
    </location>
    <ligand>
        <name>ATP</name>
        <dbReference type="ChEBI" id="CHEBI:30616"/>
    </ligand>
</feature>
<feature type="binding site" evidence="1">
    <location>
        <begin position="178"/>
        <end position="179"/>
    </location>
    <ligand>
        <name>ATP</name>
        <dbReference type="ChEBI" id="CHEBI:30616"/>
    </ligand>
</feature>
<feature type="binding site" evidence="1">
    <location>
        <position position="187"/>
    </location>
    <ligand>
        <name>ATP</name>
        <dbReference type="ChEBI" id="CHEBI:30616"/>
    </ligand>
</feature>
<feature type="binding site" evidence="1">
    <location>
        <begin position="211"/>
        <end position="213"/>
    </location>
    <ligand>
        <name>ATP</name>
        <dbReference type="ChEBI" id="CHEBI:30616"/>
    </ligand>
</feature>
<feature type="binding site" evidence="1">
    <location>
        <position position="248"/>
    </location>
    <ligand>
        <name>Mg(2+)</name>
        <dbReference type="ChEBI" id="CHEBI:18420"/>
        <label>1</label>
    </ligand>
</feature>
<feature type="binding site" evidence="1">
    <location>
        <position position="248"/>
    </location>
    <ligand>
        <name>Mn(2+)</name>
        <dbReference type="ChEBI" id="CHEBI:29035"/>
        <label>1</label>
    </ligand>
</feature>
<feature type="binding site" evidence="1">
    <location>
        <position position="260"/>
    </location>
    <ligand>
        <name>Mg(2+)</name>
        <dbReference type="ChEBI" id="CHEBI:18420"/>
        <label>1</label>
    </ligand>
</feature>
<feature type="binding site" evidence="1">
    <location>
        <position position="260"/>
    </location>
    <ligand>
        <name>Mg(2+)</name>
        <dbReference type="ChEBI" id="CHEBI:18420"/>
        <label>2</label>
    </ligand>
</feature>
<feature type="binding site" evidence="1">
    <location>
        <position position="260"/>
    </location>
    <ligand>
        <name>Mn(2+)</name>
        <dbReference type="ChEBI" id="CHEBI:29035"/>
        <label>1</label>
    </ligand>
</feature>
<feature type="binding site" evidence="1">
    <location>
        <position position="260"/>
    </location>
    <ligand>
        <name>Mn(2+)</name>
        <dbReference type="ChEBI" id="CHEBI:29035"/>
        <label>2</label>
    </ligand>
</feature>
<feature type="binding site" evidence="1">
    <location>
        <position position="262"/>
    </location>
    <ligand>
        <name>Mg(2+)</name>
        <dbReference type="ChEBI" id="CHEBI:18420"/>
        <label>2</label>
    </ligand>
</feature>
<feature type="binding site" evidence="1">
    <location>
        <position position="262"/>
    </location>
    <ligand>
        <name>Mn(2+)</name>
        <dbReference type="ChEBI" id="CHEBI:29035"/>
        <label>2</label>
    </ligand>
</feature>
<reference key="1">
    <citation type="journal article" date="2004" name="Nat. Genet.">
        <title>Comparison of genome degradation in Paratyphi A and Typhi, human-restricted serovars of Salmonella enterica that cause typhoid.</title>
        <authorList>
            <person name="McClelland M."/>
            <person name="Sanderson K.E."/>
            <person name="Clifton S.W."/>
            <person name="Latreille P."/>
            <person name="Porwollik S."/>
            <person name="Sabo A."/>
            <person name="Meyer R."/>
            <person name="Bieri T."/>
            <person name="Ozersky P."/>
            <person name="McLellan M."/>
            <person name="Harkins C.R."/>
            <person name="Wang C."/>
            <person name="Nguyen C."/>
            <person name="Berghoff A."/>
            <person name="Elliott G."/>
            <person name="Kohlberg S."/>
            <person name="Strong C."/>
            <person name="Du F."/>
            <person name="Carter J."/>
            <person name="Kremizki C."/>
            <person name="Layman D."/>
            <person name="Leonard S."/>
            <person name="Sun H."/>
            <person name="Fulton L."/>
            <person name="Nash W."/>
            <person name="Miner T."/>
            <person name="Minx P."/>
            <person name="Delehaunty K."/>
            <person name="Fronick C."/>
            <person name="Magrini V."/>
            <person name="Nhan M."/>
            <person name="Warren W."/>
            <person name="Florea L."/>
            <person name="Spieth J."/>
            <person name="Wilson R.K."/>
        </authorList>
    </citation>
    <scope>NUCLEOTIDE SEQUENCE [LARGE SCALE GENOMIC DNA]</scope>
    <source>
        <strain>ATCC 9150 / SARB42</strain>
    </source>
</reference>
<evidence type="ECO:0000255" key="1">
    <source>
        <dbReference type="HAMAP-Rule" id="MF_01552"/>
    </source>
</evidence>
<protein>
    <recommendedName>
        <fullName evidence="1">Ribosomal protein bS6--L-glutamate ligase</fullName>
        <ecNumber evidence="1">6.3.2.-</ecNumber>
    </recommendedName>
    <alternativeName>
        <fullName evidence="1">Poly-alpha-glutamate synthase</fullName>
    </alternativeName>
    <alternativeName>
        <fullName evidence="1">Ribosomal protein bS6 modification protein</fullName>
    </alternativeName>
</protein>
<sequence length="300" mass="32294">MKIAILSRDGTLYSCKRLREAAMRRGHLVEILDPLSCYMNINPAASSIHYKGRRLPHFDAVIPRIGSAITFYGTAALRQFELLGSYPLNESVAITRARDKLRSLQLLARQGIDLPITGIAHSPDDTSDLIKMVGGAPLVVKLVEGTQGIGVVLAETRQAAESVIDAFRGLNAHILVQEYIAEAKGCDIRCLVVGNEVVAAIERCAKAGDFRSNLHRGGVASIATITPRERDIAIKAAQTLGLDVAGVDILRAARGPLVMEVNASPGLEGIEKTTGVDIAGRMIQWIERHATPEFCLKIGG</sequence>
<gene>
    <name evidence="1" type="primary">rimK</name>
    <name type="ordered locus">SPA1887</name>
</gene>
<accession>Q5PGM5</accession>
<organism>
    <name type="scientific">Salmonella paratyphi A (strain ATCC 9150 / SARB42)</name>
    <dbReference type="NCBI Taxonomy" id="295319"/>
    <lineage>
        <taxon>Bacteria</taxon>
        <taxon>Pseudomonadati</taxon>
        <taxon>Pseudomonadota</taxon>
        <taxon>Gammaproteobacteria</taxon>
        <taxon>Enterobacterales</taxon>
        <taxon>Enterobacteriaceae</taxon>
        <taxon>Salmonella</taxon>
    </lineage>
</organism>
<proteinExistence type="inferred from homology"/>